<gene>
    <name evidence="1" type="primary">rplC</name>
    <name type="ordered locus">PPA1863</name>
</gene>
<name>RL3_CUTAK</name>
<reference key="1">
    <citation type="journal article" date="2004" name="Science">
        <title>The complete genome sequence of Propionibacterium acnes, a commensal of human skin.</title>
        <authorList>
            <person name="Brueggemann H."/>
            <person name="Henne A."/>
            <person name="Hoster F."/>
            <person name="Liesegang H."/>
            <person name="Wiezer A."/>
            <person name="Strittmatter A."/>
            <person name="Hujer S."/>
            <person name="Duerre P."/>
            <person name="Gottschalk G."/>
        </authorList>
    </citation>
    <scope>NUCLEOTIDE SEQUENCE [LARGE SCALE GENOMIC DNA]</scope>
    <source>
        <strain>DSM 16379 / KPA171202</strain>
    </source>
</reference>
<organism>
    <name type="scientific">Cutibacterium acnes (strain DSM 16379 / KPA171202)</name>
    <name type="common">Propionibacterium acnes</name>
    <dbReference type="NCBI Taxonomy" id="267747"/>
    <lineage>
        <taxon>Bacteria</taxon>
        <taxon>Bacillati</taxon>
        <taxon>Actinomycetota</taxon>
        <taxon>Actinomycetes</taxon>
        <taxon>Propionibacteriales</taxon>
        <taxon>Propionibacteriaceae</taxon>
        <taxon>Cutibacterium</taxon>
    </lineage>
</organism>
<comment type="function">
    <text evidence="1">One of the primary rRNA binding proteins, it binds directly near the 3'-end of the 23S rRNA, where it nucleates assembly of the 50S subunit.</text>
</comment>
<comment type="subunit">
    <text evidence="1">Part of the 50S ribosomal subunit. Forms a cluster with proteins L14 and L19.</text>
</comment>
<comment type="similarity">
    <text evidence="1">Belongs to the universal ribosomal protein uL3 family.</text>
</comment>
<keyword id="KW-0002">3D-structure</keyword>
<keyword id="KW-0687">Ribonucleoprotein</keyword>
<keyword id="KW-0689">Ribosomal protein</keyword>
<keyword id="KW-0694">RNA-binding</keyword>
<keyword id="KW-0699">rRNA-binding</keyword>
<dbReference type="EMBL" id="AE017283">
    <property type="protein sequence ID" value="AAT83587.1"/>
    <property type="molecule type" value="Genomic_DNA"/>
</dbReference>
<dbReference type="RefSeq" id="WP_002516019.1">
    <property type="nucleotide sequence ID" value="NZ_CP025935.1"/>
</dbReference>
<dbReference type="PDB" id="8CRX">
    <property type="method" value="EM"/>
    <property type="resolution" value="2.78 A"/>
    <property type="chains" value="d=1-223"/>
</dbReference>
<dbReference type="PDB" id="8CVM">
    <property type="method" value="EM"/>
    <property type="resolution" value="2.66 A"/>
    <property type="chains" value="d=1-223"/>
</dbReference>
<dbReference type="PDBsum" id="8CRX"/>
<dbReference type="PDBsum" id="8CVM"/>
<dbReference type="SMR" id="Q6A6M6"/>
<dbReference type="EnsemblBacteria" id="AAT83587">
    <property type="protein sequence ID" value="AAT83587"/>
    <property type="gene ID" value="PPA1863"/>
</dbReference>
<dbReference type="GeneID" id="92857810"/>
<dbReference type="KEGG" id="pac:PPA1863"/>
<dbReference type="eggNOG" id="COG0087">
    <property type="taxonomic scope" value="Bacteria"/>
</dbReference>
<dbReference type="HOGENOM" id="CLU_044142_4_1_11"/>
<dbReference type="Proteomes" id="UP000000603">
    <property type="component" value="Chromosome"/>
</dbReference>
<dbReference type="GO" id="GO:0022625">
    <property type="term" value="C:cytosolic large ribosomal subunit"/>
    <property type="evidence" value="ECO:0007669"/>
    <property type="project" value="TreeGrafter"/>
</dbReference>
<dbReference type="GO" id="GO:0019843">
    <property type="term" value="F:rRNA binding"/>
    <property type="evidence" value="ECO:0007669"/>
    <property type="project" value="UniProtKB-UniRule"/>
</dbReference>
<dbReference type="GO" id="GO:0003735">
    <property type="term" value="F:structural constituent of ribosome"/>
    <property type="evidence" value="ECO:0007669"/>
    <property type="project" value="InterPro"/>
</dbReference>
<dbReference type="GO" id="GO:0006412">
    <property type="term" value="P:translation"/>
    <property type="evidence" value="ECO:0007669"/>
    <property type="project" value="UniProtKB-UniRule"/>
</dbReference>
<dbReference type="FunFam" id="2.40.30.10:FF:000004">
    <property type="entry name" value="50S ribosomal protein L3"/>
    <property type="match status" value="1"/>
</dbReference>
<dbReference type="FunFam" id="3.30.160.810:FF:000001">
    <property type="entry name" value="50S ribosomal protein L3"/>
    <property type="match status" value="1"/>
</dbReference>
<dbReference type="Gene3D" id="3.30.160.810">
    <property type="match status" value="1"/>
</dbReference>
<dbReference type="Gene3D" id="2.40.30.10">
    <property type="entry name" value="Translation factors"/>
    <property type="match status" value="1"/>
</dbReference>
<dbReference type="HAMAP" id="MF_01325_B">
    <property type="entry name" value="Ribosomal_uL3_B"/>
    <property type="match status" value="1"/>
</dbReference>
<dbReference type="InterPro" id="IPR000597">
    <property type="entry name" value="Ribosomal_uL3"/>
</dbReference>
<dbReference type="InterPro" id="IPR019927">
    <property type="entry name" value="Ribosomal_uL3_bac/org-type"/>
</dbReference>
<dbReference type="InterPro" id="IPR019926">
    <property type="entry name" value="Ribosomal_uL3_CS"/>
</dbReference>
<dbReference type="InterPro" id="IPR009000">
    <property type="entry name" value="Transl_B-barrel_sf"/>
</dbReference>
<dbReference type="NCBIfam" id="TIGR03625">
    <property type="entry name" value="L3_bact"/>
    <property type="match status" value="1"/>
</dbReference>
<dbReference type="PANTHER" id="PTHR11229">
    <property type="entry name" value="50S RIBOSOMAL PROTEIN L3"/>
    <property type="match status" value="1"/>
</dbReference>
<dbReference type="PANTHER" id="PTHR11229:SF16">
    <property type="entry name" value="LARGE RIBOSOMAL SUBUNIT PROTEIN UL3C"/>
    <property type="match status" value="1"/>
</dbReference>
<dbReference type="Pfam" id="PF00297">
    <property type="entry name" value="Ribosomal_L3"/>
    <property type="match status" value="1"/>
</dbReference>
<dbReference type="SUPFAM" id="SSF50447">
    <property type="entry name" value="Translation proteins"/>
    <property type="match status" value="1"/>
</dbReference>
<dbReference type="PROSITE" id="PS00474">
    <property type="entry name" value="RIBOSOMAL_L3"/>
    <property type="match status" value="1"/>
</dbReference>
<accession>Q6A6M6</accession>
<sequence length="223" mass="23513">MTNERTVKGVLGTKLGMTQLWDEHNRLVPVTVIQAGPCVVTQVRTPETDGYSAVQLGYGAVKAKNVTKPEAGHFEKAGVTPRRHLVELRTADASEYTLGQEIAADVFSESDFVDVTGTSKGKGTAGVMKRHGFGGLRATHGVHRKHRSPGSIGGCSTPGKVIKGLRMAGRMGVERVTVQNLQVHSVDAERGIMLVRGAVPGPKGSLLVVRSAAKKAAKNGDAA</sequence>
<proteinExistence type="evidence at protein level"/>
<evidence type="ECO:0000255" key="1">
    <source>
        <dbReference type="HAMAP-Rule" id="MF_01325"/>
    </source>
</evidence>
<evidence type="ECO:0000305" key="2"/>
<evidence type="ECO:0007829" key="3">
    <source>
        <dbReference type="PDB" id="8CVM"/>
    </source>
</evidence>
<protein>
    <recommendedName>
        <fullName evidence="1">Large ribosomal subunit protein uL3</fullName>
    </recommendedName>
    <alternativeName>
        <fullName evidence="2">50S ribosomal protein L3</fullName>
    </alternativeName>
</protein>
<feature type="chain" id="PRO_0000241387" description="Large ribosomal subunit protein uL3">
    <location>
        <begin position="1"/>
        <end position="223"/>
    </location>
</feature>
<feature type="strand" evidence="3">
    <location>
        <begin position="9"/>
        <end position="21"/>
    </location>
</feature>
<feature type="strand" evidence="3">
    <location>
        <begin position="27"/>
        <end position="33"/>
    </location>
</feature>
<feature type="strand" evidence="3">
    <location>
        <begin position="38"/>
        <end position="44"/>
    </location>
</feature>
<feature type="turn" evidence="3">
    <location>
        <begin position="46"/>
        <end position="49"/>
    </location>
</feature>
<feature type="strand" evidence="3">
    <location>
        <begin position="53"/>
        <end position="56"/>
    </location>
</feature>
<feature type="helix" evidence="3">
    <location>
        <begin position="63"/>
        <end position="65"/>
    </location>
</feature>
<feature type="helix" evidence="3">
    <location>
        <begin position="68"/>
        <end position="77"/>
    </location>
</feature>
<feature type="strand" evidence="3">
    <location>
        <begin position="86"/>
        <end position="88"/>
    </location>
</feature>
<feature type="helix" evidence="3">
    <location>
        <begin position="93"/>
        <end position="95"/>
    </location>
</feature>
<feature type="helix" evidence="3">
    <location>
        <begin position="104"/>
        <end position="106"/>
    </location>
</feature>
<feature type="strand" evidence="3">
    <location>
        <begin position="112"/>
        <end position="118"/>
    </location>
</feature>
<feature type="strand" evidence="3">
    <location>
        <begin position="123"/>
        <end position="125"/>
    </location>
</feature>
<feature type="helix" evidence="3">
    <location>
        <begin position="127"/>
        <end position="130"/>
    </location>
</feature>
<feature type="strand" evidence="3">
    <location>
        <begin position="169"/>
        <end position="171"/>
    </location>
</feature>
<feature type="strand" evidence="3">
    <location>
        <begin position="174"/>
        <end position="187"/>
    </location>
</feature>
<feature type="turn" evidence="3">
    <location>
        <begin position="188"/>
        <end position="191"/>
    </location>
</feature>
<feature type="strand" evidence="3">
    <location>
        <begin position="192"/>
        <end position="197"/>
    </location>
</feature>
<feature type="strand" evidence="3">
    <location>
        <begin position="206"/>
        <end position="211"/>
    </location>
</feature>